<accession>A2ZX50</accession>
<accession>C7IXK2</accession>
<feature type="chain" id="PRO_0000423692" description="Nucleosome assembly protein 1;3">
    <location>
        <begin position="1"/>
        <end position="301"/>
    </location>
</feature>
<feature type="region of interest" description="Disordered" evidence="3">
    <location>
        <begin position="278"/>
        <end position="301"/>
    </location>
</feature>
<feature type="coiled-coil region" evidence="2">
    <location>
        <begin position="15"/>
        <end position="69"/>
    </location>
</feature>
<feature type="short sequence motif" description="Nuclear export signal" evidence="2">
    <location>
        <begin position="36"/>
        <end position="51"/>
    </location>
</feature>
<sequence length="301" mass="34918">MSNPELLSEEKAILVETLKNKLQALAEQHVDVLESLAPVVRKRVDVLIEIQSQHDELEAKFLEEKAALEANYQKLYGPLYSKRSEIVSGVLEVEGETEEREEKGVPDFWLKAMKNNEILAEEIHESDEEALKYLKDIKWCRIDDPKGFKFEFFFDTNPFFKNQVLTKTYHMIDEDDEPILEKAIGTEIEWHPGNCLTQEVLTKESSESTKPITKTEEYESFFNFFSPPQVPEDDAKIDENTAEELQNQMERDYDIASTLRDKIIPHVVSWFTGEAVQDEDYGASWVDDEEDDDDEYSDEEA</sequence>
<dbReference type="EMBL" id="AP008207">
    <property type="protein sequence ID" value="BAH91264.1"/>
    <property type="status" value="ALT_SEQ"/>
    <property type="molecule type" value="Genomic_DNA"/>
</dbReference>
<dbReference type="EMBL" id="AP014957">
    <property type="status" value="NOT_ANNOTATED_CDS"/>
    <property type="molecule type" value="Genomic_DNA"/>
</dbReference>
<dbReference type="EMBL" id="CM000138">
    <property type="protein sequence ID" value="EAZ13297.1"/>
    <property type="molecule type" value="Genomic_DNA"/>
</dbReference>
<dbReference type="SMR" id="A2ZX50"/>
<dbReference type="FunCoup" id="A2ZX50">
    <property type="interactions" value="2322"/>
</dbReference>
<dbReference type="STRING" id="39947.A2ZX50"/>
<dbReference type="PaxDb" id="39947-A2ZX50"/>
<dbReference type="GeneID" id="9269473"/>
<dbReference type="KEGG" id="dosa:Os01g0711800"/>
<dbReference type="KEGG" id="osa:9269473"/>
<dbReference type="eggNOG" id="KOG1507">
    <property type="taxonomic scope" value="Eukaryota"/>
</dbReference>
<dbReference type="HOGENOM" id="CLU_038841_4_0_1"/>
<dbReference type="InParanoid" id="A2ZX50"/>
<dbReference type="OrthoDB" id="27325at2759"/>
<dbReference type="Proteomes" id="UP000000763">
    <property type="component" value="Chromosome 1"/>
</dbReference>
<dbReference type="Proteomes" id="UP000007752">
    <property type="component" value="Chromosome 1"/>
</dbReference>
<dbReference type="Proteomes" id="UP000059680">
    <property type="component" value="Chromosome 1"/>
</dbReference>
<dbReference type="GO" id="GO:0000785">
    <property type="term" value="C:chromatin"/>
    <property type="evidence" value="ECO:0000318"/>
    <property type="project" value="GO_Central"/>
</dbReference>
<dbReference type="GO" id="GO:0005737">
    <property type="term" value="C:cytoplasm"/>
    <property type="evidence" value="ECO:0007669"/>
    <property type="project" value="UniProtKB-SubCell"/>
</dbReference>
<dbReference type="GO" id="GO:0005634">
    <property type="term" value="C:nucleus"/>
    <property type="evidence" value="ECO:0000318"/>
    <property type="project" value="GO_Central"/>
</dbReference>
<dbReference type="GO" id="GO:0003682">
    <property type="term" value="F:chromatin binding"/>
    <property type="evidence" value="ECO:0000318"/>
    <property type="project" value="GO_Central"/>
</dbReference>
<dbReference type="GO" id="GO:0042393">
    <property type="term" value="F:histone binding"/>
    <property type="evidence" value="ECO:0000318"/>
    <property type="project" value="GO_Central"/>
</dbReference>
<dbReference type="GO" id="GO:0000724">
    <property type="term" value="P:double-strand break repair via homologous recombination"/>
    <property type="evidence" value="ECO:0007669"/>
    <property type="project" value="UniProtKB-ARBA"/>
</dbReference>
<dbReference type="GO" id="GO:0006334">
    <property type="term" value="P:nucleosome assembly"/>
    <property type="evidence" value="ECO:0000318"/>
    <property type="project" value="GO_Central"/>
</dbReference>
<dbReference type="FunFam" id="1.20.5.1500:FF:000001">
    <property type="entry name" value="Nucleosome assembly protein 1-like 1"/>
    <property type="match status" value="1"/>
</dbReference>
<dbReference type="FunFam" id="3.30.1120.90:FF:000005">
    <property type="entry name" value="Nucleosome assembly protein11"/>
    <property type="match status" value="1"/>
</dbReference>
<dbReference type="Gene3D" id="1.20.5.1500">
    <property type="match status" value="1"/>
</dbReference>
<dbReference type="Gene3D" id="3.30.1120.90">
    <property type="entry name" value="Nucleosome assembly protein"/>
    <property type="match status" value="1"/>
</dbReference>
<dbReference type="InterPro" id="IPR037231">
    <property type="entry name" value="NAP-like_sf"/>
</dbReference>
<dbReference type="InterPro" id="IPR002164">
    <property type="entry name" value="NAP_family"/>
</dbReference>
<dbReference type="PANTHER" id="PTHR11875">
    <property type="entry name" value="TESTIS-SPECIFIC Y-ENCODED PROTEIN"/>
    <property type="match status" value="1"/>
</dbReference>
<dbReference type="Pfam" id="PF00956">
    <property type="entry name" value="NAP"/>
    <property type="match status" value="1"/>
</dbReference>
<dbReference type="SUPFAM" id="SSF143113">
    <property type="entry name" value="NAP-like"/>
    <property type="match status" value="1"/>
</dbReference>
<gene>
    <name type="primary">NAP1;3</name>
    <name type="synonym">NAP1_L3</name>
    <name type="ordered locus">Os01g0711800</name>
    <name type="ordered locus">LOC_Os01g51450</name>
    <name type="ORF">OsJ_03221</name>
</gene>
<comment type="function">
    <text evidence="1">May modulate chromatin structure by regulation of nucleosome assembly/disassembly.</text>
</comment>
<comment type="subcellular location">
    <subcellularLocation>
        <location evidence="1">Nucleus</location>
    </subcellularLocation>
    <subcellularLocation>
        <location evidence="1">Cytoplasm</location>
    </subcellularLocation>
</comment>
<comment type="domain">
    <text>The acidic domain is probably involved in the interaction with histones.</text>
</comment>
<comment type="similarity">
    <text evidence="4">Belongs to the nucleosome assembly protein (NAP) family.</text>
</comment>
<comment type="sequence caution" evidence="4">
    <conflict type="erroneous gene model prediction">
        <sequence resource="EMBL-CDS" id="BAH91264"/>
    </conflict>
</comment>
<reference key="1">
    <citation type="journal article" date="2005" name="Nature">
        <title>The map-based sequence of the rice genome.</title>
        <authorList>
            <consortium name="International rice genome sequencing project (IRGSP)"/>
        </authorList>
    </citation>
    <scope>NUCLEOTIDE SEQUENCE [LARGE SCALE GENOMIC DNA]</scope>
    <source>
        <strain>cv. Nipponbare</strain>
    </source>
</reference>
<reference key="2">
    <citation type="journal article" date="2008" name="Nucleic Acids Res.">
        <title>The rice annotation project database (RAP-DB): 2008 update.</title>
        <authorList>
            <consortium name="The rice annotation project (RAP)"/>
        </authorList>
    </citation>
    <scope>GENOME REANNOTATION</scope>
    <source>
        <strain>cv. Nipponbare</strain>
    </source>
</reference>
<reference key="3">
    <citation type="journal article" date="2013" name="Rice">
        <title>Improvement of the Oryza sativa Nipponbare reference genome using next generation sequence and optical map data.</title>
        <authorList>
            <person name="Kawahara Y."/>
            <person name="de la Bastide M."/>
            <person name="Hamilton J.P."/>
            <person name="Kanamori H."/>
            <person name="McCombie W.R."/>
            <person name="Ouyang S."/>
            <person name="Schwartz D.C."/>
            <person name="Tanaka T."/>
            <person name="Wu J."/>
            <person name="Zhou S."/>
            <person name="Childs K.L."/>
            <person name="Davidson R.M."/>
            <person name="Lin H."/>
            <person name="Quesada-Ocampo L."/>
            <person name="Vaillancourt B."/>
            <person name="Sakai H."/>
            <person name="Lee S.S."/>
            <person name="Kim J."/>
            <person name="Numa H."/>
            <person name="Itoh T."/>
            <person name="Buell C.R."/>
            <person name="Matsumoto T."/>
        </authorList>
    </citation>
    <scope>GENOME REANNOTATION</scope>
    <source>
        <strain>cv. Nipponbare</strain>
    </source>
</reference>
<reference key="4">
    <citation type="journal article" date="2005" name="PLoS Biol.">
        <title>The genomes of Oryza sativa: a history of duplications.</title>
        <authorList>
            <person name="Yu J."/>
            <person name="Wang J."/>
            <person name="Lin W."/>
            <person name="Li S."/>
            <person name="Li H."/>
            <person name="Zhou J."/>
            <person name="Ni P."/>
            <person name="Dong W."/>
            <person name="Hu S."/>
            <person name="Zeng C."/>
            <person name="Zhang J."/>
            <person name="Zhang Y."/>
            <person name="Li R."/>
            <person name="Xu Z."/>
            <person name="Li S."/>
            <person name="Li X."/>
            <person name="Zheng H."/>
            <person name="Cong L."/>
            <person name="Lin L."/>
            <person name="Yin J."/>
            <person name="Geng J."/>
            <person name="Li G."/>
            <person name="Shi J."/>
            <person name="Liu J."/>
            <person name="Lv H."/>
            <person name="Li J."/>
            <person name="Wang J."/>
            <person name="Deng Y."/>
            <person name="Ran L."/>
            <person name="Shi X."/>
            <person name="Wang X."/>
            <person name="Wu Q."/>
            <person name="Li C."/>
            <person name="Ren X."/>
            <person name="Wang J."/>
            <person name="Wang X."/>
            <person name="Li D."/>
            <person name="Liu D."/>
            <person name="Zhang X."/>
            <person name="Ji Z."/>
            <person name="Zhao W."/>
            <person name="Sun Y."/>
            <person name="Zhang Z."/>
            <person name="Bao J."/>
            <person name="Han Y."/>
            <person name="Dong L."/>
            <person name="Ji J."/>
            <person name="Chen P."/>
            <person name="Wu S."/>
            <person name="Liu J."/>
            <person name="Xiao Y."/>
            <person name="Bu D."/>
            <person name="Tan J."/>
            <person name="Yang L."/>
            <person name="Ye C."/>
            <person name="Zhang J."/>
            <person name="Xu J."/>
            <person name="Zhou Y."/>
            <person name="Yu Y."/>
            <person name="Zhang B."/>
            <person name="Zhuang S."/>
            <person name="Wei H."/>
            <person name="Liu B."/>
            <person name="Lei M."/>
            <person name="Yu H."/>
            <person name="Li Y."/>
            <person name="Xu H."/>
            <person name="Wei S."/>
            <person name="He X."/>
            <person name="Fang L."/>
            <person name="Zhang Z."/>
            <person name="Zhang Y."/>
            <person name="Huang X."/>
            <person name="Su Z."/>
            <person name="Tong W."/>
            <person name="Li J."/>
            <person name="Tong Z."/>
            <person name="Li S."/>
            <person name="Ye J."/>
            <person name="Wang L."/>
            <person name="Fang L."/>
            <person name="Lei T."/>
            <person name="Chen C.-S."/>
            <person name="Chen H.-C."/>
            <person name="Xu Z."/>
            <person name="Li H."/>
            <person name="Huang H."/>
            <person name="Zhang F."/>
            <person name="Xu H."/>
            <person name="Li N."/>
            <person name="Zhao C."/>
            <person name="Li S."/>
            <person name="Dong L."/>
            <person name="Huang Y."/>
            <person name="Li L."/>
            <person name="Xi Y."/>
            <person name="Qi Q."/>
            <person name="Li W."/>
            <person name="Zhang B."/>
            <person name="Hu W."/>
            <person name="Zhang Y."/>
            <person name="Tian X."/>
            <person name="Jiao Y."/>
            <person name="Liang X."/>
            <person name="Jin J."/>
            <person name="Gao L."/>
            <person name="Zheng W."/>
            <person name="Hao B."/>
            <person name="Liu S.-M."/>
            <person name="Wang W."/>
            <person name="Yuan L."/>
            <person name="Cao M."/>
            <person name="McDermott J."/>
            <person name="Samudrala R."/>
            <person name="Wang J."/>
            <person name="Wong G.K.-S."/>
            <person name="Yang H."/>
        </authorList>
    </citation>
    <scope>NUCLEOTIDE SEQUENCE [LARGE SCALE GENOMIC DNA]</scope>
    <source>
        <strain>cv. Nipponbare</strain>
    </source>
</reference>
<organism>
    <name type="scientific">Oryza sativa subsp. japonica</name>
    <name type="common">Rice</name>
    <dbReference type="NCBI Taxonomy" id="39947"/>
    <lineage>
        <taxon>Eukaryota</taxon>
        <taxon>Viridiplantae</taxon>
        <taxon>Streptophyta</taxon>
        <taxon>Embryophyta</taxon>
        <taxon>Tracheophyta</taxon>
        <taxon>Spermatophyta</taxon>
        <taxon>Magnoliopsida</taxon>
        <taxon>Liliopsida</taxon>
        <taxon>Poales</taxon>
        <taxon>Poaceae</taxon>
        <taxon>BOP clade</taxon>
        <taxon>Oryzoideae</taxon>
        <taxon>Oryzeae</taxon>
        <taxon>Oryzinae</taxon>
        <taxon>Oryza</taxon>
        <taxon>Oryza sativa</taxon>
    </lineage>
</organism>
<evidence type="ECO:0000250" key="1"/>
<evidence type="ECO:0000255" key="2"/>
<evidence type="ECO:0000256" key="3">
    <source>
        <dbReference type="SAM" id="MobiDB-lite"/>
    </source>
</evidence>
<evidence type="ECO:0000305" key="4"/>
<keyword id="KW-0143">Chaperone</keyword>
<keyword id="KW-0175">Coiled coil</keyword>
<keyword id="KW-0963">Cytoplasm</keyword>
<keyword id="KW-0539">Nucleus</keyword>
<keyword id="KW-1185">Reference proteome</keyword>
<protein>
    <recommendedName>
        <fullName>Nucleosome assembly protein 1;3</fullName>
        <shortName>OsNAP1;3</shortName>
    </recommendedName>
    <alternativeName>
        <fullName>Nucleosome assembly protein 1-like 3</fullName>
        <shortName>OsNAP1_L3</shortName>
    </alternativeName>
</protein>
<name>NAP1C_ORYSJ</name>
<proteinExistence type="inferred from homology"/>